<feature type="chain" id="PRO_1000025628" description="GMP reductase">
    <location>
        <begin position="1"/>
        <end position="347"/>
    </location>
</feature>
<feature type="active site" description="Thioimidate intermediate" evidence="1">
    <location>
        <position position="186"/>
    </location>
</feature>
<feature type="binding site" evidence="1">
    <location>
        <begin position="108"/>
        <end position="131"/>
    </location>
    <ligand>
        <name>NADP(+)</name>
        <dbReference type="ChEBI" id="CHEBI:58349"/>
    </ligand>
</feature>
<feature type="binding site" evidence="1">
    <location>
        <position position="181"/>
    </location>
    <ligand>
        <name>K(+)</name>
        <dbReference type="ChEBI" id="CHEBI:29103"/>
    </ligand>
</feature>
<feature type="binding site" evidence="1">
    <location>
        <position position="183"/>
    </location>
    <ligand>
        <name>K(+)</name>
        <dbReference type="ChEBI" id="CHEBI:29103"/>
    </ligand>
</feature>
<feature type="binding site" evidence="1">
    <location>
        <begin position="216"/>
        <end position="239"/>
    </location>
    <ligand>
        <name>NADP(+)</name>
        <dbReference type="ChEBI" id="CHEBI:58349"/>
    </ligand>
</feature>
<sequence length="347" mass="37492">MRIEEGLKLGFKDVLIRPKRSTLKSRSEVALERQFTFKHSGWNWSGVPIIAANMDTVGTFRMAEVLASFDILTAVHKHYTLEQWAEFVKRSPESVLRHVMVSTGTSSADFDKMKQILALSPSLKFICIDVANGYSEHFVSFLQRAREACPDKVICAGNVVTGEMVEELILSGADIVKVGIGPGSVCTTRVKTGVGYPQLSAVIECADAAHGLGGQIVSDGGCSVPGDVAKAFGGGADFVMLGGMLAGHDECEGRVVEENGEKFMLFYGMSSESAMKRHVGGVAQYRAAEGKTVKLPLRGSVDNTVRDIMGGLRSACTYVGASHLKELTKRTTFIRVAEQENRVFGTD</sequence>
<name>GUAC_YERPS</name>
<reference key="1">
    <citation type="journal article" date="2004" name="Proc. Natl. Acad. Sci. U.S.A.">
        <title>Insights into the evolution of Yersinia pestis through whole-genome comparison with Yersinia pseudotuberculosis.</title>
        <authorList>
            <person name="Chain P.S.G."/>
            <person name="Carniel E."/>
            <person name="Larimer F.W."/>
            <person name="Lamerdin J."/>
            <person name="Stoutland P.O."/>
            <person name="Regala W.M."/>
            <person name="Georgescu A.M."/>
            <person name="Vergez L.M."/>
            <person name="Land M.L."/>
            <person name="Motin V.L."/>
            <person name="Brubaker R.R."/>
            <person name="Fowler J."/>
            <person name="Hinnebusch J."/>
            <person name="Marceau M."/>
            <person name="Medigue C."/>
            <person name="Simonet M."/>
            <person name="Chenal-Francisque V."/>
            <person name="Souza B."/>
            <person name="Dacheux D."/>
            <person name="Elliott J.M."/>
            <person name="Derbise A."/>
            <person name="Hauser L.J."/>
            <person name="Garcia E."/>
        </authorList>
    </citation>
    <scope>NUCLEOTIDE SEQUENCE [LARGE SCALE GENOMIC DNA]</scope>
    <source>
        <strain>IP32953</strain>
    </source>
</reference>
<proteinExistence type="inferred from homology"/>
<protein>
    <recommendedName>
        <fullName evidence="1">GMP reductase</fullName>
        <ecNumber evidence="1">1.7.1.7</ecNumber>
    </recommendedName>
    <alternativeName>
        <fullName evidence="1">Guanosine 5'-monophosphate oxidoreductase</fullName>
        <shortName evidence="1">Guanosine monophosphate reductase</shortName>
    </alternativeName>
</protein>
<gene>
    <name evidence="1" type="primary">guaC</name>
    <name type="ordered locus">YPTB0703</name>
</gene>
<dbReference type="EC" id="1.7.1.7" evidence="1"/>
<dbReference type="EMBL" id="BX936398">
    <property type="protein sequence ID" value="CAH19943.1"/>
    <property type="molecule type" value="Genomic_DNA"/>
</dbReference>
<dbReference type="RefSeq" id="WP_002209320.1">
    <property type="nucleotide sequence ID" value="NZ_CP009712.1"/>
</dbReference>
<dbReference type="SMR" id="Q66EJ0"/>
<dbReference type="KEGG" id="ypo:BZ17_1852"/>
<dbReference type="KEGG" id="yps:YPTB0703"/>
<dbReference type="PATRIC" id="fig|273123.14.peg.1965"/>
<dbReference type="Proteomes" id="UP000001011">
    <property type="component" value="Chromosome"/>
</dbReference>
<dbReference type="GO" id="GO:0005829">
    <property type="term" value="C:cytosol"/>
    <property type="evidence" value="ECO:0007669"/>
    <property type="project" value="TreeGrafter"/>
</dbReference>
<dbReference type="GO" id="GO:1902560">
    <property type="term" value="C:GMP reductase complex"/>
    <property type="evidence" value="ECO:0007669"/>
    <property type="project" value="InterPro"/>
</dbReference>
<dbReference type="GO" id="GO:0003920">
    <property type="term" value="F:GMP reductase activity"/>
    <property type="evidence" value="ECO:0007669"/>
    <property type="project" value="UniProtKB-UniRule"/>
</dbReference>
<dbReference type="GO" id="GO:0046872">
    <property type="term" value="F:metal ion binding"/>
    <property type="evidence" value="ECO:0007669"/>
    <property type="project" value="UniProtKB-KW"/>
</dbReference>
<dbReference type="GO" id="GO:0006163">
    <property type="term" value="P:purine nucleotide metabolic process"/>
    <property type="evidence" value="ECO:0007669"/>
    <property type="project" value="UniProtKB-UniRule"/>
</dbReference>
<dbReference type="CDD" id="cd00381">
    <property type="entry name" value="IMPDH"/>
    <property type="match status" value="1"/>
</dbReference>
<dbReference type="FunFam" id="3.20.20.70:FF:000012">
    <property type="entry name" value="GMP reductase"/>
    <property type="match status" value="1"/>
</dbReference>
<dbReference type="Gene3D" id="3.20.20.70">
    <property type="entry name" value="Aldolase class I"/>
    <property type="match status" value="1"/>
</dbReference>
<dbReference type="HAMAP" id="MF_00596">
    <property type="entry name" value="GMP_reduct_type1"/>
    <property type="match status" value="1"/>
</dbReference>
<dbReference type="InterPro" id="IPR013785">
    <property type="entry name" value="Aldolase_TIM"/>
</dbReference>
<dbReference type="InterPro" id="IPR050139">
    <property type="entry name" value="GMP_reductase"/>
</dbReference>
<dbReference type="InterPro" id="IPR005993">
    <property type="entry name" value="GMPR"/>
</dbReference>
<dbReference type="InterPro" id="IPR015875">
    <property type="entry name" value="IMP_DH/GMP_Rdtase_CS"/>
</dbReference>
<dbReference type="InterPro" id="IPR001093">
    <property type="entry name" value="IMP_DH_GMPRt"/>
</dbReference>
<dbReference type="NCBIfam" id="TIGR01305">
    <property type="entry name" value="GMP_reduct_1"/>
    <property type="match status" value="1"/>
</dbReference>
<dbReference type="NCBIfam" id="NF003470">
    <property type="entry name" value="PRK05096.1"/>
    <property type="match status" value="1"/>
</dbReference>
<dbReference type="PANTHER" id="PTHR43170">
    <property type="entry name" value="GMP REDUCTASE"/>
    <property type="match status" value="1"/>
</dbReference>
<dbReference type="PANTHER" id="PTHR43170:SF5">
    <property type="entry name" value="GMP REDUCTASE"/>
    <property type="match status" value="1"/>
</dbReference>
<dbReference type="Pfam" id="PF00478">
    <property type="entry name" value="IMPDH"/>
    <property type="match status" value="1"/>
</dbReference>
<dbReference type="PIRSF" id="PIRSF000235">
    <property type="entry name" value="GMP_reductase"/>
    <property type="match status" value="1"/>
</dbReference>
<dbReference type="SMART" id="SM01240">
    <property type="entry name" value="IMPDH"/>
    <property type="match status" value="1"/>
</dbReference>
<dbReference type="SUPFAM" id="SSF51412">
    <property type="entry name" value="Inosine monophosphate dehydrogenase (IMPDH)"/>
    <property type="match status" value="1"/>
</dbReference>
<dbReference type="PROSITE" id="PS00487">
    <property type="entry name" value="IMP_DH_GMP_RED"/>
    <property type="match status" value="1"/>
</dbReference>
<comment type="function">
    <text evidence="1">Catalyzes the irreversible NADPH-dependent deamination of GMP to IMP. It functions in the conversion of nucleobase, nucleoside and nucleotide derivatives of G to A nucleotides, and in maintaining the intracellular balance of A and G nucleotides.</text>
</comment>
<comment type="catalytic activity">
    <reaction evidence="1">
        <text>IMP + NH4(+) + NADP(+) = GMP + NADPH + 2 H(+)</text>
        <dbReference type="Rhea" id="RHEA:17185"/>
        <dbReference type="ChEBI" id="CHEBI:15378"/>
        <dbReference type="ChEBI" id="CHEBI:28938"/>
        <dbReference type="ChEBI" id="CHEBI:57783"/>
        <dbReference type="ChEBI" id="CHEBI:58053"/>
        <dbReference type="ChEBI" id="CHEBI:58115"/>
        <dbReference type="ChEBI" id="CHEBI:58349"/>
        <dbReference type="EC" id="1.7.1.7"/>
    </reaction>
</comment>
<comment type="subunit">
    <text evidence="1">Homotetramer.</text>
</comment>
<comment type="similarity">
    <text evidence="1">Belongs to the IMPDH/GMPR family. GuaC type 1 subfamily.</text>
</comment>
<keyword id="KW-0479">Metal-binding</keyword>
<keyword id="KW-0521">NADP</keyword>
<keyword id="KW-0560">Oxidoreductase</keyword>
<keyword id="KW-0630">Potassium</keyword>
<organism>
    <name type="scientific">Yersinia pseudotuberculosis serotype I (strain IP32953)</name>
    <dbReference type="NCBI Taxonomy" id="273123"/>
    <lineage>
        <taxon>Bacteria</taxon>
        <taxon>Pseudomonadati</taxon>
        <taxon>Pseudomonadota</taxon>
        <taxon>Gammaproteobacteria</taxon>
        <taxon>Enterobacterales</taxon>
        <taxon>Yersiniaceae</taxon>
        <taxon>Yersinia</taxon>
    </lineage>
</organism>
<evidence type="ECO:0000255" key="1">
    <source>
        <dbReference type="HAMAP-Rule" id="MF_00596"/>
    </source>
</evidence>
<accession>Q66EJ0</accession>